<accession>P23612</accession>
<accession>Q28607</accession>
<protein>
    <recommendedName>
        <fullName evidence="1">Tryptophan--tRNA ligase, cytoplasmic</fullName>
        <ecNumber evidence="1">6.1.1.2</ecNumber>
    </recommendedName>
    <alternativeName>
        <fullName>Tryptophanyl-tRNA synthetase</fullName>
        <shortName>TrpRS</shortName>
    </alternativeName>
    <component>
        <recommendedName>
            <fullName>T1-TrpRS</fullName>
        </recommendedName>
    </component>
    <component>
        <recommendedName>
            <fullName>T2-TrpRS</fullName>
        </recommendedName>
    </component>
</protein>
<organism>
    <name type="scientific">Oryctolagus cuniculus</name>
    <name type="common">Rabbit</name>
    <dbReference type="NCBI Taxonomy" id="9986"/>
    <lineage>
        <taxon>Eukaryota</taxon>
        <taxon>Metazoa</taxon>
        <taxon>Chordata</taxon>
        <taxon>Craniata</taxon>
        <taxon>Vertebrata</taxon>
        <taxon>Euteleostomi</taxon>
        <taxon>Mammalia</taxon>
        <taxon>Eutheria</taxon>
        <taxon>Euarchontoglires</taxon>
        <taxon>Glires</taxon>
        <taxon>Lagomorpha</taxon>
        <taxon>Leporidae</taxon>
        <taxon>Oryctolagus</taxon>
    </lineage>
</organism>
<sequence>MADVTNGERCASPQELFSSIAAQGELVKSLKARKAPKEEIDSAVKMLLSLKTSYKEAMGEDYKADCPPGNSTPDSHGDPEAVDDKEDFVDPWTVRTSSAKGIDYDKLIVQFGSSKIDKELVNRIERATGQRPHRFLRRGIFFSHRDMNQVLDAYENKKPFYLYTGRGPSSEAMHVGHLIPFIFTKWLQDVFDVPLVVQMSDDEKYLWKDLTLEQVYGYTLENAKDIIACGFDVNKTFIFSDLDYMGMSPGFYKNVVKIQKHVTFNQVKGIFGFTDSDCIGKISFPAIQAAPSFSNSFPQIFHGQADIQCLIPCAIDQDPYFRMTRDVAPRIGYPKPALLHSTFFPALQGAQTKMSASDPNSSIFLTDTAKQIKTKVNKHAFSGGRDTIEEHRQFGGNCDVDVSFMYLTFFLEDDDKLEQIRKDYSSGAMLTGELKKELIDVLQPLVAEHQARRKEVTDEMVKEFMTPRQLCFHYQ</sequence>
<dbReference type="EC" id="6.1.1.2" evidence="1"/>
<dbReference type="EMBL" id="M33460">
    <property type="protein sequence ID" value="AAA31246.1"/>
    <property type="status" value="ALT_SEQ"/>
    <property type="molecule type" value="mRNA"/>
</dbReference>
<dbReference type="EMBL" id="U02595">
    <property type="protein sequence ID" value="AAB60257.1"/>
    <property type="molecule type" value="mRNA"/>
</dbReference>
<dbReference type="PIR" id="A35904">
    <property type="entry name" value="YWRBPR"/>
</dbReference>
<dbReference type="RefSeq" id="NP_001075757.1">
    <property type="nucleotide sequence ID" value="NM_001082288.1"/>
</dbReference>
<dbReference type="SMR" id="P23612"/>
<dbReference type="FunCoup" id="P23612">
    <property type="interactions" value="2428"/>
</dbReference>
<dbReference type="STRING" id="9986.ENSOCUP00000047050"/>
<dbReference type="PaxDb" id="9986-ENSOCUP00000013564"/>
<dbReference type="GeneID" id="100009123"/>
<dbReference type="KEGG" id="ocu:100009123"/>
<dbReference type="CTD" id="7453"/>
<dbReference type="eggNOG" id="KOG2145">
    <property type="taxonomic scope" value="Eukaryota"/>
</dbReference>
<dbReference type="InParanoid" id="P23612"/>
<dbReference type="OrthoDB" id="10261385at2759"/>
<dbReference type="Proteomes" id="UP000001811">
    <property type="component" value="Unplaced"/>
</dbReference>
<dbReference type="GO" id="GO:0005737">
    <property type="term" value="C:cytoplasm"/>
    <property type="evidence" value="ECO:0007669"/>
    <property type="project" value="UniProtKB-SubCell"/>
</dbReference>
<dbReference type="GO" id="GO:0005524">
    <property type="term" value="F:ATP binding"/>
    <property type="evidence" value="ECO:0007669"/>
    <property type="project" value="UniProtKB-KW"/>
</dbReference>
<dbReference type="GO" id="GO:0004830">
    <property type="term" value="F:tryptophan-tRNA ligase activity"/>
    <property type="evidence" value="ECO:0007669"/>
    <property type="project" value="UniProtKB-EC"/>
</dbReference>
<dbReference type="GO" id="GO:0001525">
    <property type="term" value="P:angiogenesis"/>
    <property type="evidence" value="ECO:0007669"/>
    <property type="project" value="UniProtKB-KW"/>
</dbReference>
<dbReference type="GO" id="GO:0006436">
    <property type="term" value="P:tryptophanyl-tRNA aminoacylation"/>
    <property type="evidence" value="ECO:0007669"/>
    <property type="project" value="InterPro"/>
</dbReference>
<dbReference type="CDD" id="cd00806">
    <property type="entry name" value="TrpRS_core"/>
    <property type="match status" value="1"/>
</dbReference>
<dbReference type="CDD" id="cd00936">
    <property type="entry name" value="WEPRS_RNA"/>
    <property type="match status" value="1"/>
</dbReference>
<dbReference type="FunFam" id="1.10.287.10:FF:000006">
    <property type="entry name" value="Bifunctional glutamate/proline--tRNA ligase"/>
    <property type="match status" value="1"/>
</dbReference>
<dbReference type="FunFam" id="1.10.240.10:FF:000003">
    <property type="entry name" value="Tryptophan--tRNA ligase, cytoplasmic"/>
    <property type="match status" value="1"/>
</dbReference>
<dbReference type="FunFam" id="3.40.50.620:FF:000454">
    <property type="entry name" value="Tryptophan--tRNA ligase, cytoplasmic"/>
    <property type="match status" value="1"/>
</dbReference>
<dbReference type="Gene3D" id="3.40.50.620">
    <property type="entry name" value="HUPs"/>
    <property type="match status" value="1"/>
</dbReference>
<dbReference type="Gene3D" id="1.10.287.10">
    <property type="entry name" value="S15/NS1, RNA-binding"/>
    <property type="match status" value="1"/>
</dbReference>
<dbReference type="Gene3D" id="1.10.240.10">
    <property type="entry name" value="Tyrosyl-Transfer RNA Synthetase"/>
    <property type="match status" value="1"/>
</dbReference>
<dbReference type="InterPro" id="IPR001412">
    <property type="entry name" value="aa-tRNA-synth_I_CS"/>
</dbReference>
<dbReference type="InterPro" id="IPR002305">
    <property type="entry name" value="aa-tRNA-synth_Ic"/>
</dbReference>
<dbReference type="InterPro" id="IPR014729">
    <property type="entry name" value="Rossmann-like_a/b/a_fold"/>
</dbReference>
<dbReference type="InterPro" id="IPR002306">
    <property type="entry name" value="Trp-tRNA-ligase"/>
</dbReference>
<dbReference type="InterPro" id="IPR009068">
    <property type="entry name" value="uS15_NS1_RNA-bd_sf"/>
</dbReference>
<dbReference type="InterPro" id="IPR000738">
    <property type="entry name" value="WHEP-TRS_dom"/>
</dbReference>
<dbReference type="NCBIfam" id="TIGR00233">
    <property type="entry name" value="trpS"/>
    <property type="match status" value="1"/>
</dbReference>
<dbReference type="PANTHER" id="PTHR10055:SF1">
    <property type="entry name" value="TRYPTOPHAN--TRNA LIGASE, CYTOPLASMIC"/>
    <property type="match status" value="1"/>
</dbReference>
<dbReference type="PANTHER" id="PTHR10055">
    <property type="entry name" value="TRYPTOPHANYL-TRNA SYNTHETASE"/>
    <property type="match status" value="1"/>
</dbReference>
<dbReference type="Pfam" id="PF00579">
    <property type="entry name" value="tRNA-synt_1b"/>
    <property type="match status" value="1"/>
</dbReference>
<dbReference type="Pfam" id="PF00458">
    <property type="entry name" value="WHEP-TRS"/>
    <property type="match status" value="1"/>
</dbReference>
<dbReference type="PRINTS" id="PR01039">
    <property type="entry name" value="TRNASYNTHTRP"/>
</dbReference>
<dbReference type="SMART" id="SM00991">
    <property type="entry name" value="WHEP-TRS"/>
    <property type="match status" value="1"/>
</dbReference>
<dbReference type="SUPFAM" id="SSF52374">
    <property type="entry name" value="Nucleotidylyl transferase"/>
    <property type="match status" value="1"/>
</dbReference>
<dbReference type="SUPFAM" id="SSF47060">
    <property type="entry name" value="S15/NS1 RNA-binding domain"/>
    <property type="match status" value="1"/>
</dbReference>
<dbReference type="PROSITE" id="PS00178">
    <property type="entry name" value="AA_TRNA_LIGASE_I"/>
    <property type="match status" value="1"/>
</dbReference>
<dbReference type="PROSITE" id="PS00762">
    <property type="entry name" value="WHEP_TRS_1"/>
    <property type="match status" value="1"/>
</dbReference>
<dbReference type="PROSITE" id="PS51185">
    <property type="entry name" value="WHEP_TRS_2"/>
    <property type="match status" value="1"/>
</dbReference>
<name>SYWC_RABIT</name>
<keyword id="KW-0030">Aminoacyl-tRNA synthetase</keyword>
<keyword id="KW-0037">Angiogenesis</keyword>
<keyword id="KW-0067">ATP-binding</keyword>
<keyword id="KW-0963">Cytoplasm</keyword>
<keyword id="KW-0436">Ligase</keyword>
<keyword id="KW-0547">Nucleotide-binding</keyword>
<keyword id="KW-0597">Phosphoprotein</keyword>
<keyword id="KW-0648">Protein biosynthesis</keyword>
<keyword id="KW-1185">Reference proteome</keyword>
<evidence type="ECO:0000250" key="1">
    <source>
        <dbReference type="UniProtKB" id="P23381"/>
    </source>
</evidence>
<evidence type="ECO:0000250" key="2">
    <source>
        <dbReference type="UniProtKB" id="P32921"/>
    </source>
</evidence>
<evidence type="ECO:0000255" key="3">
    <source>
        <dbReference type="PROSITE-ProRule" id="PRU00531"/>
    </source>
</evidence>
<evidence type="ECO:0000256" key="4">
    <source>
        <dbReference type="SAM" id="MobiDB-lite"/>
    </source>
</evidence>
<evidence type="ECO:0000269" key="5">
    <source>
    </source>
</evidence>
<evidence type="ECO:0000305" key="6"/>
<evidence type="ECO:0000305" key="7">
    <source>
    </source>
</evidence>
<comment type="function">
    <text evidence="1 5">Catalyzes the attachment of tryptophan to tRNA(Trp) in a two-step reaction: tryptophan is first activated by ATP to form Trp-AMP and then transferred to the acceptor end of the tRNA(Trp) (PubMed:8404867). Could also possess an angiostatic activity (By similarity).</text>
</comment>
<comment type="catalytic activity">
    <reaction evidence="1">
        <text>tRNA(Trp) + L-tryptophan + ATP = L-tryptophyl-tRNA(Trp) + AMP + diphosphate + H(+)</text>
        <dbReference type="Rhea" id="RHEA:24080"/>
        <dbReference type="Rhea" id="RHEA-COMP:9671"/>
        <dbReference type="Rhea" id="RHEA-COMP:9705"/>
        <dbReference type="ChEBI" id="CHEBI:15378"/>
        <dbReference type="ChEBI" id="CHEBI:30616"/>
        <dbReference type="ChEBI" id="CHEBI:33019"/>
        <dbReference type="ChEBI" id="CHEBI:57912"/>
        <dbReference type="ChEBI" id="CHEBI:78442"/>
        <dbReference type="ChEBI" id="CHEBI:78535"/>
        <dbReference type="ChEBI" id="CHEBI:456215"/>
        <dbReference type="EC" id="6.1.1.2"/>
    </reaction>
    <physiologicalReaction direction="left-to-right" evidence="1">
        <dbReference type="Rhea" id="RHEA:24081"/>
    </physiologicalReaction>
</comment>
<comment type="subunit">
    <text evidence="1">Homodimer. Interacts with oxidized form of GAPDH (By similarity).</text>
</comment>
<comment type="subcellular location">
    <subcellularLocation>
        <location evidence="1">Cytoplasm</location>
    </subcellularLocation>
</comment>
<comment type="PTM">
    <text evidence="1">Proteolytic cleavage generates 2 forms; T1-TrpRS and T2-TrpRS.</text>
</comment>
<comment type="similarity">
    <text evidence="6">Belongs to the class-I aminoacyl-tRNA synthetase family.</text>
</comment>
<comment type="caution">
    <text evidence="7">Was originally thought to be a eukaryotic release factor (ERF).</text>
</comment>
<proteinExistence type="evidence at transcript level"/>
<reference key="1">
    <citation type="journal article" date="1990" name="Proc. Natl. Acad. Sci. U.S.A.">
        <title>Cloning and expression of a mammalian peptide chain release factor with sequence similarity to tryptophanyl-tRNA synthetases.</title>
        <authorList>
            <person name="Lee C.C."/>
            <person name="Craigen W.J."/>
            <person name="Muzny D.M."/>
            <person name="Harlow E."/>
            <person name="Caskey C.T."/>
        </authorList>
    </citation>
    <scope>NUCLEOTIDE SEQUENCE [MRNA]</scope>
</reference>
<reference key="2">
    <citation type="journal article" date="1993" name="EMBO J.">
        <title>Mammalian polypeptide chain release factor and tryptophanyl-tRNA synthetase are distinct proteins.</title>
        <authorList>
            <person name="Frolova L.Y."/>
            <person name="Dalphin M.E."/>
            <person name="Justesen J."/>
            <person name="Powell R.J."/>
            <person name="Drugeon G."/>
            <person name="McCaughan K.K."/>
            <person name="Kisselev L.L."/>
            <person name="Tate W.P."/>
            <person name="Haenni A.-L."/>
        </authorList>
    </citation>
    <scope>SEQUENCE REVISION TO 169-174 AND 227-228</scope>
    <scope>FUNCTION</scope>
</reference>
<gene>
    <name type="primary">WARS1</name>
    <name type="synonym">WARS</name>
</gene>
<feature type="chain" id="PRO_0000136741" description="Tryptophan--tRNA ligase, cytoplasmic">
    <location>
        <begin position="1"/>
        <end position="475"/>
    </location>
</feature>
<feature type="chain" id="PRO_0000386467" description="T1-TrpRS" evidence="1">
    <location>
        <begin position="75"/>
        <end position="475"/>
    </location>
</feature>
<feature type="chain" id="PRO_0000386468" description="T2-TrpRS" evidence="1">
    <location>
        <begin position="98"/>
        <end position="475"/>
    </location>
</feature>
<feature type="domain" description="WHEP-TRS" evidence="3">
    <location>
        <begin position="12"/>
        <end position="68"/>
    </location>
</feature>
<feature type="region of interest" description="Disordered" evidence="4">
    <location>
        <begin position="61"/>
        <end position="87"/>
    </location>
</feature>
<feature type="short sequence motif" description="'HIGH' region">
    <location>
        <begin position="168"/>
        <end position="177"/>
    </location>
</feature>
<feature type="short sequence motif" description="'KMSKS' region">
    <location>
        <begin position="353"/>
        <end position="357"/>
    </location>
</feature>
<feature type="modified residue" description="N6-succinyllysine" evidence="2">
    <location>
        <position position="158"/>
    </location>
</feature>
<feature type="modified residue" description="Phosphoserine" evidence="1">
    <location>
        <position position="355"/>
    </location>
</feature>